<protein>
    <recommendedName>
        <fullName evidence="1">Large ribosomal subunit protein bL36c</fullName>
    </recommendedName>
    <alternativeName>
        <fullName>50S ribosomal protein L36, plastid</fullName>
    </alternativeName>
</protein>
<sequence>MKIRASIRKICEKCRLICRRRRIIVICSNPRHKQRQG</sequence>
<gene>
    <name type="primary">rpl36</name>
</gene>
<accession>P30069</accession>
<evidence type="ECO:0000305" key="1"/>
<geneLocation type="non-photosynthetic plastid"/>
<keyword id="KW-0934">Plastid</keyword>
<keyword id="KW-0687">Ribonucleoprotein</keyword>
<keyword id="KW-0689">Ribosomal protein</keyword>
<dbReference type="EMBL" id="M81884">
    <property type="protein sequence ID" value="AAA65860.1"/>
    <property type="molecule type" value="Genomic_DNA"/>
</dbReference>
<dbReference type="PIR" id="S78391">
    <property type="entry name" value="S78391"/>
</dbReference>
<dbReference type="RefSeq" id="NP_054386.1">
    <property type="nucleotide sequence ID" value="NC_001568.1"/>
</dbReference>
<dbReference type="SMR" id="P30069"/>
<dbReference type="GeneID" id="801423"/>
<dbReference type="GO" id="GO:0009536">
    <property type="term" value="C:plastid"/>
    <property type="evidence" value="ECO:0007669"/>
    <property type="project" value="UniProtKB-SubCell"/>
</dbReference>
<dbReference type="GO" id="GO:1990904">
    <property type="term" value="C:ribonucleoprotein complex"/>
    <property type="evidence" value="ECO:0007669"/>
    <property type="project" value="UniProtKB-KW"/>
</dbReference>
<dbReference type="GO" id="GO:0005840">
    <property type="term" value="C:ribosome"/>
    <property type="evidence" value="ECO:0007669"/>
    <property type="project" value="UniProtKB-KW"/>
</dbReference>
<dbReference type="GO" id="GO:0003735">
    <property type="term" value="F:structural constituent of ribosome"/>
    <property type="evidence" value="ECO:0007669"/>
    <property type="project" value="InterPro"/>
</dbReference>
<dbReference type="GO" id="GO:0006412">
    <property type="term" value="P:translation"/>
    <property type="evidence" value="ECO:0007669"/>
    <property type="project" value="InterPro"/>
</dbReference>
<dbReference type="HAMAP" id="MF_00251">
    <property type="entry name" value="Ribosomal_bL36"/>
    <property type="match status" value="1"/>
</dbReference>
<dbReference type="InterPro" id="IPR000473">
    <property type="entry name" value="Ribosomal_bL36"/>
</dbReference>
<dbReference type="InterPro" id="IPR035977">
    <property type="entry name" value="Ribosomal_bL36_sp"/>
</dbReference>
<dbReference type="NCBIfam" id="TIGR01022">
    <property type="entry name" value="rpmJ_bact"/>
    <property type="match status" value="1"/>
</dbReference>
<dbReference type="PANTHER" id="PTHR42888">
    <property type="entry name" value="50S RIBOSOMAL PROTEIN L36, CHLOROPLASTIC"/>
    <property type="match status" value="1"/>
</dbReference>
<dbReference type="PANTHER" id="PTHR42888:SF1">
    <property type="entry name" value="LARGE RIBOSOMAL SUBUNIT PROTEIN BL36C"/>
    <property type="match status" value="1"/>
</dbReference>
<dbReference type="Pfam" id="PF00444">
    <property type="entry name" value="Ribosomal_L36"/>
    <property type="match status" value="1"/>
</dbReference>
<dbReference type="SUPFAM" id="SSF57840">
    <property type="entry name" value="Ribosomal protein L36"/>
    <property type="match status" value="1"/>
</dbReference>
<dbReference type="PROSITE" id="PS00828">
    <property type="entry name" value="RIBOSOMAL_L36"/>
    <property type="match status" value="1"/>
</dbReference>
<name>RK36_EPIVI</name>
<proteinExistence type="inferred from homology"/>
<reference key="1">
    <citation type="journal article" date="1992" name="Proc. Natl. Acad. Sci. U.S.A.">
        <title>Function and evolution of a minimal plastid genome from a nonphotosynthetic parasitic plant.</title>
        <authorList>
            <person name="Wolfe K.H."/>
            <person name="Morden C.W."/>
            <person name="Palmer J.D."/>
        </authorList>
    </citation>
    <scope>NUCLEOTIDE SEQUENCE [LARGE SCALE GENOMIC DNA]</scope>
</reference>
<reference key="2">
    <citation type="journal article" date="1992" name="J. Mol. Evol.">
        <title>Rapid evolution of the plastid translational apparatus in a nonphotosynthetic plant: loss or accelerated sequence evolution of tRNA and ribosomal protein genes.</title>
        <authorList>
            <person name="Wolfe K.H."/>
            <person name="Morden C.W."/>
            <person name="Ems S.C."/>
            <person name="Palmer J.D."/>
        </authorList>
    </citation>
    <scope>NUCLEOTIDE SEQUENCE [GENOMIC DNA]</scope>
</reference>
<organism>
    <name type="scientific">Epifagus virginiana</name>
    <name type="common">Beechdrops</name>
    <name type="synonym">Orobanche virginiana</name>
    <dbReference type="NCBI Taxonomy" id="4177"/>
    <lineage>
        <taxon>Eukaryota</taxon>
        <taxon>Viridiplantae</taxon>
        <taxon>Streptophyta</taxon>
        <taxon>Embryophyta</taxon>
        <taxon>Tracheophyta</taxon>
        <taxon>Spermatophyta</taxon>
        <taxon>Magnoliopsida</taxon>
        <taxon>eudicotyledons</taxon>
        <taxon>Gunneridae</taxon>
        <taxon>Pentapetalae</taxon>
        <taxon>asterids</taxon>
        <taxon>lamiids</taxon>
        <taxon>Lamiales</taxon>
        <taxon>Orobanchaceae</taxon>
        <taxon>Orobancheae</taxon>
        <taxon>Epifagus</taxon>
    </lineage>
</organism>
<comment type="subcellular location">
    <subcellularLocation>
        <location>Plastid</location>
    </subcellularLocation>
</comment>
<comment type="similarity">
    <text evidence="1">Belongs to the bacterial ribosomal protein bL36 family.</text>
</comment>
<feature type="chain" id="PRO_0000126319" description="Large ribosomal subunit protein bL36c">
    <location>
        <begin position="1"/>
        <end position="37"/>
    </location>
</feature>